<gene>
    <name type="primary">cld</name>
</gene>
<keyword id="KW-0106">Calcium</keyword>
<keyword id="KW-0903">Direct protein sequencing</keyword>
<keyword id="KW-0349">Heme</keyword>
<keyword id="KW-0408">Iron</keyword>
<keyword id="KW-0479">Metal-binding</keyword>
<keyword id="KW-0560">Oxidoreductase</keyword>
<keyword id="KW-0574">Periplasm</keyword>
<keyword id="KW-0732">Signal</keyword>
<name>CLD_IDEDE</name>
<proteinExistence type="evidence at protein level"/>
<dbReference type="EC" id="1.13.11.49"/>
<dbReference type="EMBL" id="AJ296077">
    <property type="protein sequence ID" value="CAC14884.1"/>
    <property type="molecule type" value="Genomic_DNA"/>
</dbReference>
<dbReference type="RefSeq" id="WP_151124413.1">
    <property type="nucleotide sequence ID" value="NZ_CP088082.1"/>
</dbReference>
<dbReference type="SMR" id="Q9F437"/>
<dbReference type="KEGG" id="ag:CAC14884"/>
<dbReference type="OrthoDB" id="212165at2"/>
<dbReference type="SABIO-RK" id="Q9F437"/>
<dbReference type="GO" id="GO:0042597">
    <property type="term" value="C:periplasmic space"/>
    <property type="evidence" value="ECO:0000314"/>
    <property type="project" value="UniProtKB"/>
</dbReference>
<dbReference type="GO" id="GO:0050587">
    <property type="term" value="F:chlorite O2-lyase activity"/>
    <property type="evidence" value="ECO:0000314"/>
    <property type="project" value="UniProtKB"/>
</dbReference>
<dbReference type="GO" id="GO:0020037">
    <property type="term" value="F:heme binding"/>
    <property type="evidence" value="ECO:0007669"/>
    <property type="project" value="InterPro"/>
</dbReference>
<dbReference type="GO" id="GO:0046872">
    <property type="term" value="F:metal ion binding"/>
    <property type="evidence" value="ECO:0007669"/>
    <property type="project" value="UniProtKB-KW"/>
</dbReference>
<dbReference type="Gene3D" id="3.30.70.3420">
    <property type="match status" value="1"/>
</dbReference>
<dbReference type="InterPro" id="IPR010644">
    <property type="entry name" value="ChdC/CLD"/>
</dbReference>
<dbReference type="InterPro" id="IPR011008">
    <property type="entry name" value="Dimeric_a/b-barrel"/>
</dbReference>
<dbReference type="PANTHER" id="PTHR36843:SF1">
    <property type="entry name" value="COPROHEME DECARBOXYLASE"/>
    <property type="match status" value="1"/>
</dbReference>
<dbReference type="PANTHER" id="PTHR36843">
    <property type="entry name" value="HEME-DEPENDENT PEROXIDASE YWFI-RELATED"/>
    <property type="match status" value="1"/>
</dbReference>
<dbReference type="Pfam" id="PF06778">
    <property type="entry name" value="Chlor_dismutase"/>
    <property type="match status" value="1"/>
</dbReference>
<dbReference type="SUPFAM" id="SSF54909">
    <property type="entry name" value="Dimeric alpha+beta barrel"/>
    <property type="match status" value="1"/>
</dbReference>
<reference key="1">
    <citation type="journal article" date="2002" name="Biochim. Biophys. Acta">
        <title>Cloning, characterisation, and expression of a novel gene encoding chlorite dismutase from Ideonella dechloratans.</title>
        <authorList>
            <person name="Danielsson Thorell H."/>
            <person name="Karlsson J."/>
            <person name="Portelius E."/>
            <person name="Nilsson T."/>
        </authorList>
    </citation>
    <scope>NUCLEOTIDE SEQUENCE [GENOMIC DNA]</scope>
    <scope>PROTEIN SEQUENCE OF 39-63; 77-87 AND 171-185</scope>
    <scope>COFACTOR</scope>
    <source>
        <strain>ATCC 51718 / CCUG 30977</strain>
    </source>
</reference>
<reference key="2">
    <citation type="journal article" date="2001" name="J. Biol. Inorg. Chem.">
        <title>Chlorite dismutase from Ideonella dechloratans.</title>
        <authorList>
            <person name="Stenklo K."/>
            <person name="Danielsson Thorell H."/>
            <person name="Bergius H."/>
            <person name="Aasa R."/>
            <person name="Nilsson T."/>
        </authorList>
    </citation>
    <scope>PROTEIN SEQUENCE OF 39-60</scope>
    <scope>FUNCTION</scope>
    <scope>CATALYTIC ACTIVITY</scope>
    <scope>COFACTOR</scope>
    <scope>SUBCELLULAR LOCATION</scope>
    <scope>BIOPHYSICOCHEMICAL PROPERTIES</scope>
    <source>
        <strain>ATCC 51718 / CCUG 30977</strain>
    </source>
</reference>
<reference key="3">
    <citation type="journal article" date="2004" name="Eur. J. Biochem.">
        <title>Comparison of native and recombinant chlorite dismutase from Ideonella dechloratans.</title>
        <authorList>
            <person name="Danielsson Thorell H."/>
            <person name="Beyer N.H."/>
            <person name="Heegaard N.H."/>
            <person name="Oehman M."/>
            <person name="Nilsson T."/>
        </authorList>
    </citation>
    <scope>PROTEIN SEQUENCE OF 281-285</scope>
    <scope>IDENTIFICATION BY MASS SPECTROMETRY</scope>
    <source>
        <strain>ATCC 51718 / CCUG 30977</strain>
    </source>
</reference>
<reference key="4">
    <citation type="journal article" date="2012" name="Appl. Environ. Microbiol.">
        <title>Expression of chlorite dismutase and chlorate reductase in the presence of oxygen and/or chlorate as the terminal electron acceptor in Ideonella dechloratans.</title>
        <authorList>
            <person name="Lindqvist M.H."/>
            <person name="Johansson N."/>
            <person name="Nilsson T."/>
            <person name="Rova M."/>
        </authorList>
    </citation>
    <scope>FUNCTION</scope>
    <scope>INDUCTION</scope>
    <source>
        <strain>ATCC 51718 / CCUG 30977</strain>
    </source>
</reference>
<accession>Q9F437</accession>
<sequence length="285" mass="31429">MKVRCVSLVAAGLLTIAGSAIGQPAPAPMPAMAPAAKPAMNTPVDRAKILSAPGVFVAFSTYKIRPDYFKVALAERKGAADEVMAVLEKHKEKVIVDAYLTRGYEAKSDYFLRVHAYDAVAAQAFLVDFRATRFGMYSDVTESLVGITKALNYISKDKSPDLNKGLSGATYAGDAPRFAFMIPVKKNADWWNLTDEQRLKEMETHTLPTLPFLVNVKRKLYHSTGLDDTDFITYFETNDLGAFNNLMLSLAKVPENKYHVRWGNPTVLGTIQPIENLVKTLSMGN</sequence>
<comment type="function">
    <text evidence="2 4">Catalyzes the heme-dependent decomposition of chlorite to O(2) and chloride with high efficiency and specificity. Used to detoxify chlorite, a by-product of the reduction of perchlorate, a primarily anthropogenic pollutant, in perchlorate-respiring bacteria.</text>
</comment>
<comment type="catalytic activity">
    <reaction evidence="2">
        <text>chloride + O2 = chlorite</text>
        <dbReference type="Rhea" id="RHEA:21404"/>
        <dbReference type="ChEBI" id="CHEBI:15379"/>
        <dbReference type="ChEBI" id="CHEBI:17441"/>
        <dbReference type="ChEBI" id="CHEBI:17996"/>
        <dbReference type="EC" id="1.13.11.49"/>
    </reaction>
</comment>
<comment type="cofactor">
    <cofactor evidence="2 3">
        <name>heme b</name>
        <dbReference type="ChEBI" id="CHEBI:60344"/>
    </cofactor>
    <text evidence="2 3">Binds 1 heme b (iron(II)-protoporphyrin IX) group per monomer.</text>
</comment>
<comment type="biophysicochemical properties">
    <kinetics>
        <KM evidence="2">0.26 mM for chlorite</KM>
        <Vmax evidence="2">4.3 mmol/min/mg enzyme</Vmax>
    </kinetics>
</comment>
<comment type="subunit">
    <text evidence="1">Homopentamer.</text>
</comment>
<comment type="subcellular location">
    <subcellularLocation>
        <location evidence="2">Periplasm</location>
    </subcellularLocation>
</comment>
<comment type="induction">
    <text evidence="4">Expressed under aerobic conditions. Significantly increased upon shift to anaerobic conditions.</text>
</comment>
<comment type="similarity">
    <text evidence="5">Belongs to the chlorite dismutase family.</text>
</comment>
<protein>
    <recommendedName>
        <fullName>Chlorite dismutase</fullName>
        <ecNumber>1.13.11.49</ecNumber>
    </recommendedName>
    <alternativeName>
        <fullName>Chlorite O(2)-lyase</fullName>
    </alternativeName>
</protein>
<feature type="signal peptide" evidence="2 3">
    <location>
        <begin position="1"/>
        <end position="38"/>
    </location>
</feature>
<feature type="chain" id="PRO_5000066624" description="Chlorite dismutase">
    <location>
        <begin position="39"/>
        <end position="285"/>
    </location>
</feature>
<feature type="active site" description="Proton acceptor" evidence="1">
    <location>
        <position position="218"/>
    </location>
</feature>
<feature type="binding site" evidence="1">
    <location>
        <position position="105"/>
    </location>
    <ligand>
        <name>Ca(2+)</name>
        <dbReference type="ChEBI" id="CHEBI:29108"/>
    </ligand>
</feature>
<feature type="binding site" description="axial binding residue" evidence="1">
    <location>
        <position position="205"/>
    </location>
    <ligand>
        <name>heme</name>
        <dbReference type="ChEBI" id="CHEBI:30413"/>
    </ligand>
    <ligandPart>
        <name>Fe</name>
        <dbReference type="ChEBI" id="CHEBI:18248"/>
    </ligandPart>
</feature>
<feature type="binding site" evidence="1">
    <location>
        <position position="227"/>
    </location>
    <ligand>
        <name>Ca(2+)</name>
        <dbReference type="ChEBI" id="CHEBI:29108"/>
    </ligand>
</feature>
<feature type="binding site" evidence="1">
    <location>
        <position position="266"/>
    </location>
    <ligand>
        <name>Ca(2+)</name>
        <dbReference type="ChEBI" id="CHEBI:29108"/>
    </ligand>
</feature>
<feature type="sequence conflict" description="In Ref. 2; AA sequence." evidence="5" ref="2">
    <original>F</original>
    <variation>P</variation>
    <location>
        <position position="59"/>
    </location>
</feature>
<evidence type="ECO:0000250" key="1"/>
<evidence type="ECO:0000269" key="2">
    <source>
    </source>
</evidence>
<evidence type="ECO:0000269" key="3">
    <source>
    </source>
</evidence>
<evidence type="ECO:0000269" key="4">
    <source>
    </source>
</evidence>
<evidence type="ECO:0000305" key="5"/>
<organism>
    <name type="scientific">Ideonella dechloratans</name>
    <dbReference type="NCBI Taxonomy" id="36863"/>
    <lineage>
        <taxon>Bacteria</taxon>
        <taxon>Pseudomonadati</taxon>
        <taxon>Pseudomonadota</taxon>
        <taxon>Betaproteobacteria</taxon>
        <taxon>Burkholderiales</taxon>
        <taxon>Sphaerotilaceae</taxon>
        <taxon>Ideonella</taxon>
    </lineage>
</organism>